<keyword id="KW-0067">ATP-binding</keyword>
<keyword id="KW-0436">Ligase</keyword>
<keyword id="KW-0460">Magnesium</keyword>
<keyword id="KW-0479">Metal-binding</keyword>
<keyword id="KW-0547">Nucleotide-binding</keyword>
<keyword id="KW-0658">Purine biosynthesis</keyword>
<keyword id="KW-1185">Reference proteome</keyword>
<proteinExistence type="inferred from homology"/>
<feature type="chain" id="PRO_0000319265" description="Formate-dependent phosphoribosylglycinamide formyltransferase">
    <location>
        <begin position="1"/>
        <end position="400"/>
    </location>
</feature>
<feature type="domain" description="ATP-grasp" evidence="1">
    <location>
        <begin position="120"/>
        <end position="309"/>
    </location>
</feature>
<feature type="binding site" evidence="1">
    <location>
        <begin position="22"/>
        <end position="23"/>
    </location>
    <ligand>
        <name>N(1)-(5-phospho-beta-D-ribosyl)glycinamide</name>
        <dbReference type="ChEBI" id="CHEBI:143788"/>
    </ligand>
</feature>
<feature type="binding site" evidence="1">
    <location>
        <position position="82"/>
    </location>
    <ligand>
        <name>N(1)-(5-phospho-beta-D-ribosyl)glycinamide</name>
        <dbReference type="ChEBI" id="CHEBI:143788"/>
    </ligand>
</feature>
<feature type="binding site" evidence="1">
    <location>
        <position position="115"/>
    </location>
    <ligand>
        <name>ATP</name>
        <dbReference type="ChEBI" id="CHEBI:30616"/>
    </ligand>
</feature>
<feature type="binding site" evidence="1">
    <location>
        <position position="156"/>
    </location>
    <ligand>
        <name>ATP</name>
        <dbReference type="ChEBI" id="CHEBI:30616"/>
    </ligand>
</feature>
<feature type="binding site" evidence="1">
    <location>
        <begin position="161"/>
        <end position="166"/>
    </location>
    <ligand>
        <name>ATP</name>
        <dbReference type="ChEBI" id="CHEBI:30616"/>
    </ligand>
</feature>
<feature type="binding site" evidence="1">
    <location>
        <begin position="196"/>
        <end position="199"/>
    </location>
    <ligand>
        <name>ATP</name>
        <dbReference type="ChEBI" id="CHEBI:30616"/>
    </ligand>
</feature>
<feature type="binding site" evidence="1">
    <location>
        <position position="204"/>
    </location>
    <ligand>
        <name>ATP</name>
        <dbReference type="ChEBI" id="CHEBI:30616"/>
    </ligand>
</feature>
<feature type="binding site" evidence="1">
    <location>
        <position position="268"/>
    </location>
    <ligand>
        <name>Mg(2+)</name>
        <dbReference type="ChEBI" id="CHEBI:18420"/>
    </ligand>
</feature>
<feature type="binding site" evidence="1">
    <location>
        <position position="280"/>
    </location>
    <ligand>
        <name>Mg(2+)</name>
        <dbReference type="ChEBI" id="CHEBI:18420"/>
    </ligand>
</feature>
<feature type="binding site" evidence="1">
    <location>
        <position position="287"/>
    </location>
    <ligand>
        <name>N(1)-(5-phospho-beta-D-ribosyl)glycinamide</name>
        <dbReference type="ChEBI" id="CHEBI:143788"/>
    </ligand>
</feature>
<feature type="binding site" evidence="1">
    <location>
        <position position="361"/>
    </location>
    <ligand>
        <name>N(1)-(5-phospho-beta-D-ribosyl)glycinamide</name>
        <dbReference type="ChEBI" id="CHEBI:143788"/>
    </ligand>
</feature>
<feature type="binding site" evidence="1">
    <location>
        <begin position="368"/>
        <end position="369"/>
    </location>
    <ligand>
        <name>N(1)-(5-phospho-beta-D-ribosyl)glycinamide</name>
        <dbReference type="ChEBI" id="CHEBI:143788"/>
    </ligand>
</feature>
<sequence>MTTLGTPLSPSATRVLLLGSGELGKEVAIELQRFGVEVIAADRYANAPAMQVAHRSHVLDMLDPQALRALIAQEQPHLIVPEIEAIHTETLVALEHEQGQKVIPTARAARLTMDREGIRRLAAETLGLPTSPYRFVDTAAEYREAIATVGLPCVVKPVMSSSGKGQSTLRSEADIDAAWDYAQTGGRAGAGRCIVEGFIDFDYEITLLTVRHAGGTSFCDPIGHWQKDGDYRESWQPQPMSAAALRRSQEIAQAITDELGGWGLFGVELFVKGDEVWFSEVSPRPHDTGLVTLVSQELSEFALHARAILGLPVGAENGGVIRQSGPSASCALLAHGNGVPVFDNVAEALRDPDTALRLFGKPRVDGHRRVGVTLARAGSIDAAREKARVAAAALTIQLRD</sequence>
<dbReference type="EC" id="6.3.1.21" evidence="1"/>
<dbReference type="EMBL" id="AE008922">
    <property type="protein sequence ID" value="AAM40436.1"/>
    <property type="molecule type" value="Genomic_DNA"/>
</dbReference>
<dbReference type="RefSeq" id="NP_636512.1">
    <property type="nucleotide sequence ID" value="NC_003902.1"/>
</dbReference>
<dbReference type="RefSeq" id="WP_011036337.1">
    <property type="nucleotide sequence ID" value="NC_003902.1"/>
</dbReference>
<dbReference type="SMR" id="Q8PBI2"/>
<dbReference type="STRING" id="190485.XCC1137"/>
<dbReference type="EnsemblBacteria" id="AAM40436">
    <property type="protein sequence ID" value="AAM40436"/>
    <property type="gene ID" value="XCC1137"/>
</dbReference>
<dbReference type="KEGG" id="xcc:XCC1137"/>
<dbReference type="PATRIC" id="fig|190485.4.peg.1216"/>
<dbReference type="eggNOG" id="COG0027">
    <property type="taxonomic scope" value="Bacteria"/>
</dbReference>
<dbReference type="HOGENOM" id="CLU_011534_1_3_6"/>
<dbReference type="OrthoDB" id="9804625at2"/>
<dbReference type="UniPathway" id="UPA00074">
    <property type="reaction ID" value="UER00127"/>
</dbReference>
<dbReference type="Proteomes" id="UP000001010">
    <property type="component" value="Chromosome"/>
</dbReference>
<dbReference type="GO" id="GO:0005829">
    <property type="term" value="C:cytosol"/>
    <property type="evidence" value="ECO:0000318"/>
    <property type="project" value="GO_Central"/>
</dbReference>
<dbReference type="GO" id="GO:0005524">
    <property type="term" value="F:ATP binding"/>
    <property type="evidence" value="ECO:0007669"/>
    <property type="project" value="UniProtKB-UniRule"/>
</dbReference>
<dbReference type="GO" id="GO:0000287">
    <property type="term" value="F:magnesium ion binding"/>
    <property type="evidence" value="ECO:0007669"/>
    <property type="project" value="InterPro"/>
</dbReference>
<dbReference type="GO" id="GO:0043815">
    <property type="term" value="F:phosphoribosylglycinamide formyltransferase 2 activity"/>
    <property type="evidence" value="ECO:0007669"/>
    <property type="project" value="UniProtKB-UniRule"/>
</dbReference>
<dbReference type="GO" id="GO:0004644">
    <property type="term" value="F:phosphoribosylglycinamide formyltransferase activity"/>
    <property type="evidence" value="ECO:0007669"/>
    <property type="project" value="InterPro"/>
</dbReference>
<dbReference type="GO" id="GO:0006189">
    <property type="term" value="P:'de novo' IMP biosynthetic process"/>
    <property type="evidence" value="ECO:0007669"/>
    <property type="project" value="UniProtKB-UniRule"/>
</dbReference>
<dbReference type="FunFam" id="3.30.1490.20:FF:000013">
    <property type="entry name" value="Formate-dependent phosphoribosylglycinamide formyltransferase"/>
    <property type="match status" value="1"/>
</dbReference>
<dbReference type="FunFam" id="3.30.470.20:FF:000027">
    <property type="entry name" value="Formate-dependent phosphoribosylglycinamide formyltransferase"/>
    <property type="match status" value="1"/>
</dbReference>
<dbReference type="FunFam" id="3.40.50.20:FF:000007">
    <property type="entry name" value="Formate-dependent phosphoribosylglycinamide formyltransferase"/>
    <property type="match status" value="1"/>
</dbReference>
<dbReference type="Gene3D" id="3.40.50.20">
    <property type="match status" value="1"/>
</dbReference>
<dbReference type="Gene3D" id="3.30.1490.20">
    <property type="entry name" value="ATP-grasp fold, A domain"/>
    <property type="match status" value="1"/>
</dbReference>
<dbReference type="Gene3D" id="3.30.470.20">
    <property type="entry name" value="ATP-grasp fold, B domain"/>
    <property type="match status" value="1"/>
</dbReference>
<dbReference type="HAMAP" id="MF_01643">
    <property type="entry name" value="PurT"/>
    <property type="match status" value="1"/>
</dbReference>
<dbReference type="InterPro" id="IPR011761">
    <property type="entry name" value="ATP-grasp"/>
</dbReference>
<dbReference type="InterPro" id="IPR003135">
    <property type="entry name" value="ATP-grasp_carboxylate-amine"/>
</dbReference>
<dbReference type="InterPro" id="IPR013815">
    <property type="entry name" value="ATP_grasp_subdomain_1"/>
</dbReference>
<dbReference type="InterPro" id="IPR016185">
    <property type="entry name" value="PreATP-grasp_dom_sf"/>
</dbReference>
<dbReference type="InterPro" id="IPR005862">
    <property type="entry name" value="PurT"/>
</dbReference>
<dbReference type="InterPro" id="IPR054350">
    <property type="entry name" value="PurT/PurK_preATP-grasp"/>
</dbReference>
<dbReference type="InterPro" id="IPR048740">
    <property type="entry name" value="PurT_C"/>
</dbReference>
<dbReference type="InterPro" id="IPR011054">
    <property type="entry name" value="Rudment_hybrid_motif"/>
</dbReference>
<dbReference type="NCBIfam" id="NF006766">
    <property type="entry name" value="PRK09288.1"/>
    <property type="match status" value="1"/>
</dbReference>
<dbReference type="NCBIfam" id="TIGR01142">
    <property type="entry name" value="purT"/>
    <property type="match status" value="1"/>
</dbReference>
<dbReference type="PANTHER" id="PTHR43055">
    <property type="entry name" value="FORMATE-DEPENDENT PHOSPHORIBOSYLGLYCINAMIDE FORMYLTRANSFERASE"/>
    <property type="match status" value="1"/>
</dbReference>
<dbReference type="PANTHER" id="PTHR43055:SF1">
    <property type="entry name" value="FORMATE-DEPENDENT PHOSPHORIBOSYLGLYCINAMIDE FORMYLTRANSFERASE"/>
    <property type="match status" value="1"/>
</dbReference>
<dbReference type="Pfam" id="PF02222">
    <property type="entry name" value="ATP-grasp"/>
    <property type="match status" value="1"/>
</dbReference>
<dbReference type="Pfam" id="PF21244">
    <property type="entry name" value="PurT_C"/>
    <property type="match status" value="1"/>
</dbReference>
<dbReference type="Pfam" id="PF22660">
    <property type="entry name" value="RS_preATP-grasp-like"/>
    <property type="match status" value="1"/>
</dbReference>
<dbReference type="SUPFAM" id="SSF56059">
    <property type="entry name" value="Glutathione synthetase ATP-binding domain-like"/>
    <property type="match status" value="1"/>
</dbReference>
<dbReference type="SUPFAM" id="SSF52440">
    <property type="entry name" value="PreATP-grasp domain"/>
    <property type="match status" value="1"/>
</dbReference>
<dbReference type="SUPFAM" id="SSF51246">
    <property type="entry name" value="Rudiment single hybrid motif"/>
    <property type="match status" value="1"/>
</dbReference>
<dbReference type="PROSITE" id="PS50975">
    <property type="entry name" value="ATP_GRASP"/>
    <property type="match status" value="1"/>
</dbReference>
<reference key="1">
    <citation type="journal article" date="2002" name="Nature">
        <title>Comparison of the genomes of two Xanthomonas pathogens with differing host specificities.</title>
        <authorList>
            <person name="da Silva A.C.R."/>
            <person name="Ferro J.A."/>
            <person name="Reinach F.C."/>
            <person name="Farah C.S."/>
            <person name="Furlan L.R."/>
            <person name="Quaggio R.B."/>
            <person name="Monteiro-Vitorello C.B."/>
            <person name="Van Sluys M.A."/>
            <person name="Almeida N.F. Jr."/>
            <person name="Alves L.M.C."/>
            <person name="do Amaral A.M."/>
            <person name="Bertolini M.C."/>
            <person name="Camargo L.E.A."/>
            <person name="Camarotte G."/>
            <person name="Cannavan F."/>
            <person name="Cardozo J."/>
            <person name="Chambergo F."/>
            <person name="Ciapina L.P."/>
            <person name="Cicarelli R.M.B."/>
            <person name="Coutinho L.L."/>
            <person name="Cursino-Santos J.R."/>
            <person name="El-Dorry H."/>
            <person name="Faria J.B."/>
            <person name="Ferreira A.J.S."/>
            <person name="Ferreira R.C.C."/>
            <person name="Ferro M.I.T."/>
            <person name="Formighieri E.F."/>
            <person name="Franco M.C."/>
            <person name="Greggio C.C."/>
            <person name="Gruber A."/>
            <person name="Katsuyama A.M."/>
            <person name="Kishi L.T."/>
            <person name="Leite R.P."/>
            <person name="Lemos E.G.M."/>
            <person name="Lemos M.V.F."/>
            <person name="Locali E.C."/>
            <person name="Machado M.A."/>
            <person name="Madeira A.M.B.N."/>
            <person name="Martinez-Rossi N.M."/>
            <person name="Martins E.C."/>
            <person name="Meidanis J."/>
            <person name="Menck C.F.M."/>
            <person name="Miyaki C.Y."/>
            <person name="Moon D.H."/>
            <person name="Moreira L.M."/>
            <person name="Novo M.T.M."/>
            <person name="Okura V.K."/>
            <person name="Oliveira M.C."/>
            <person name="Oliveira V.R."/>
            <person name="Pereira H.A."/>
            <person name="Rossi A."/>
            <person name="Sena J.A.D."/>
            <person name="Silva C."/>
            <person name="de Souza R.F."/>
            <person name="Spinola L.A.F."/>
            <person name="Takita M.A."/>
            <person name="Tamura R.E."/>
            <person name="Teixeira E.C."/>
            <person name="Tezza R.I.D."/>
            <person name="Trindade dos Santos M."/>
            <person name="Truffi D."/>
            <person name="Tsai S.M."/>
            <person name="White F.F."/>
            <person name="Setubal J.C."/>
            <person name="Kitajima J.P."/>
        </authorList>
    </citation>
    <scope>NUCLEOTIDE SEQUENCE [LARGE SCALE GENOMIC DNA]</scope>
    <source>
        <strain>ATCC 33913 / DSM 3586 / NCPPB 528 / LMG 568 / P 25</strain>
    </source>
</reference>
<evidence type="ECO:0000255" key="1">
    <source>
        <dbReference type="HAMAP-Rule" id="MF_01643"/>
    </source>
</evidence>
<protein>
    <recommendedName>
        <fullName evidence="1">Formate-dependent phosphoribosylglycinamide formyltransferase</fullName>
        <ecNumber evidence="1">6.3.1.21</ecNumber>
    </recommendedName>
    <alternativeName>
        <fullName evidence="1">5'-phosphoribosylglycinamide transformylase 2</fullName>
    </alternativeName>
    <alternativeName>
        <fullName evidence="1">Formate-dependent GAR transformylase</fullName>
    </alternativeName>
    <alternativeName>
        <fullName evidence="1">GAR transformylase 2</fullName>
        <shortName evidence="1">GART 2</shortName>
    </alternativeName>
    <alternativeName>
        <fullName evidence="1">Non-folate glycinamide ribonucleotide transformylase</fullName>
    </alternativeName>
    <alternativeName>
        <fullName evidence="1">Phosphoribosylglycinamide formyltransferase 2</fullName>
    </alternativeName>
</protein>
<organism>
    <name type="scientific">Xanthomonas campestris pv. campestris (strain ATCC 33913 / DSM 3586 / NCPPB 528 / LMG 568 / P 25)</name>
    <dbReference type="NCBI Taxonomy" id="190485"/>
    <lineage>
        <taxon>Bacteria</taxon>
        <taxon>Pseudomonadati</taxon>
        <taxon>Pseudomonadota</taxon>
        <taxon>Gammaproteobacteria</taxon>
        <taxon>Lysobacterales</taxon>
        <taxon>Lysobacteraceae</taxon>
        <taxon>Xanthomonas</taxon>
    </lineage>
</organism>
<name>PURT_XANCP</name>
<accession>Q8PBI2</accession>
<gene>
    <name evidence="1" type="primary">purT</name>
    <name type="ordered locus">XCC1137</name>
</gene>
<comment type="function">
    <text evidence="1">Involved in the de novo purine biosynthesis. Catalyzes the transfer of formate to 5-phospho-ribosyl-glycinamide (GAR), producing 5-phospho-ribosyl-N-formylglycinamide (FGAR). Formate is provided by PurU via hydrolysis of 10-formyl-tetrahydrofolate.</text>
</comment>
<comment type="catalytic activity">
    <reaction evidence="1">
        <text>N(1)-(5-phospho-beta-D-ribosyl)glycinamide + formate + ATP = N(2)-formyl-N(1)-(5-phospho-beta-D-ribosyl)glycinamide + ADP + phosphate + H(+)</text>
        <dbReference type="Rhea" id="RHEA:24829"/>
        <dbReference type="ChEBI" id="CHEBI:15378"/>
        <dbReference type="ChEBI" id="CHEBI:15740"/>
        <dbReference type="ChEBI" id="CHEBI:30616"/>
        <dbReference type="ChEBI" id="CHEBI:43474"/>
        <dbReference type="ChEBI" id="CHEBI:143788"/>
        <dbReference type="ChEBI" id="CHEBI:147286"/>
        <dbReference type="ChEBI" id="CHEBI:456216"/>
        <dbReference type="EC" id="6.3.1.21"/>
    </reaction>
    <physiologicalReaction direction="left-to-right" evidence="1">
        <dbReference type="Rhea" id="RHEA:24830"/>
    </physiologicalReaction>
</comment>
<comment type="pathway">
    <text evidence="1">Purine metabolism; IMP biosynthesis via de novo pathway; N(2)-formyl-N(1)-(5-phospho-D-ribosyl)glycinamide from N(1)-(5-phospho-D-ribosyl)glycinamide (formate route): step 1/1.</text>
</comment>
<comment type="subunit">
    <text evidence="1">Homodimer.</text>
</comment>
<comment type="similarity">
    <text evidence="1">Belongs to the PurK/PurT family.</text>
</comment>